<feature type="chain" id="PRO_0000377349" description="tRNA dimethylallyltransferase">
    <location>
        <begin position="1"/>
        <end position="310"/>
    </location>
</feature>
<feature type="region of interest" description="Interaction with substrate tRNA" evidence="1">
    <location>
        <begin position="49"/>
        <end position="52"/>
    </location>
</feature>
<feature type="binding site" evidence="1">
    <location>
        <begin position="24"/>
        <end position="31"/>
    </location>
    <ligand>
        <name>ATP</name>
        <dbReference type="ChEBI" id="CHEBI:30616"/>
    </ligand>
</feature>
<feature type="binding site" evidence="1">
    <location>
        <begin position="26"/>
        <end position="31"/>
    </location>
    <ligand>
        <name>substrate</name>
    </ligand>
</feature>
<feature type="site" description="Interaction with substrate tRNA" evidence="1">
    <location>
        <position position="115"/>
    </location>
</feature>
<reference key="1">
    <citation type="submission" date="2006-05" db="EMBL/GenBank/DDBJ databases">
        <authorList>
            <consortium name="Genoscope"/>
        </authorList>
    </citation>
    <scope>NUCLEOTIDE SEQUENCE [LARGE SCALE GENOMIC DNA]</scope>
    <source>
        <strain>WH7803</strain>
    </source>
</reference>
<accession>A5GI07</accession>
<dbReference type="EC" id="2.5.1.75" evidence="1"/>
<dbReference type="EMBL" id="CT971583">
    <property type="protein sequence ID" value="CAK22572.1"/>
    <property type="molecule type" value="Genomic_DNA"/>
</dbReference>
<dbReference type="SMR" id="A5GI07"/>
<dbReference type="STRING" id="32051.SynWH7803_0146"/>
<dbReference type="KEGG" id="syx:SynWH7803_0146"/>
<dbReference type="eggNOG" id="COG0324">
    <property type="taxonomic scope" value="Bacteria"/>
</dbReference>
<dbReference type="HOGENOM" id="CLU_032616_0_1_3"/>
<dbReference type="OrthoDB" id="9776390at2"/>
<dbReference type="Proteomes" id="UP000001566">
    <property type="component" value="Chromosome"/>
</dbReference>
<dbReference type="GO" id="GO:0005524">
    <property type="term" value="F:ATP binding"/>
    <property type="evidence" value="ECO:0007669"/>
    <property type="project" value="UniProtKB-UniRule"/>
</dbReference>
<dbReference type="GO" id="GO:0052381">
    <property type="term" value="F:tRNA dimethylallyltransferase activity"/>
    <property type="evidence" value="ECO:0007669"/>
    <property type="project" value="UniProtKB-UniRule"/>
</dbReference>
<dbReference type="GO" id="GO:0006400">
    <property type="term" value="P:tRNA modification"/>
    <property type="evidence" value="ECO:0007669"/>
    <property type="project" value="TreeGrafter"/>
</dbReference>
<dbReference type="Gene3D" id="1.10.20.140">
    <property type="match status" value="1"/>
</dbReference>
<dbReference type="Gene3D" id="3.40.50.300">
    <property type="entry name" value="P-loop containing nucleotide triphosphate hydrolases"/>
    <property type="match status" value="1"/>
</dbReference>
<dbReference type="HAMAP" id="MF_00185">
    <property type="entry name" value="IPP_trans"/>
    <property type="match status" value="1"/>
</dbReference>
<dbReference type="InterPro" id="IPR039657">
    <property type="entry name" value="Dimethylallyltransferase"/>
</dbReference>
<dbReference type="InterPro" id="IPR018022">
    <property type="entry name" value="IPT"/>
</dbReference>
<dbReference type="InterPro" id="IPR027417">
    <property type="entry name" value="P-loop_NTPase"/>
</dbReference>
<dbReference type="NCBIfam" id="TIGR00174">
    <property type="entry name" value="miaA"/>
    <property type="match status" value="1"/>
</dbReference>
<dbReference type="PANTHER" id="PTHR11088">
    <property type="entry name" value="TRNA DIMETHYLALLYLTRANSFERASE"/>
    <property type="match status" value="1"/>
</dbReference>
<dbReference type="PANTHER" id="PTHR11088:SF60">
    <property type="entry name" value="TRNA DIMETHYLALLYLTRANSFERASE"/>
    <property type="match status" value="1"/>
</dbReference>
<dbReference type="Pfam" id="PF01715">
    <property type="entry name" value="IPPT"/>
    <property type="match status" value="1"/>
</dbReference>
<dbReference type="SUPFAM" id="SSF52540">
    <property type="entry name" value="P-loop containing nucleoside triphosphate hydrolases"/>
    <property type="match status" value="1"/>
</dbReference>
<evidence type="ECO:0000255" key="1">
    <source>
        <dbReference type="HAMAP-Rule" id="MF_00185"/>
    </source>
</evidence>
<proteinExistence type="inferred from homology"/>
<keyword id="KW-0067">ATP-binding</keyword>
<keyword id="KW-0460">Magnesium</keyword>
<keyword id="KW-0547">Nucleotide-binding</keyword>
<keyword id="KW-1185">Reference proteome</keyword>
<keyword id="KW-0808">Transferase</keyword>
<keyword id="KW-0819">tRNA processing</keyword>
<sequence length="310" mass="34173">MPHTSPETEAQRDSNAPLVVVLLGPTASGKTALALELAERFDLEIINVDSRQLYQEMSVGTAKPSPEQQARIRHHLLDLRPPDQPITLQEFQEEALQAVNQSLAKRGAAFLVGGSGLYLKALTAGLRPPAVAPQPALRRQLAQLGQPLCHQLLNTADPEAAVRIASADALRTQRALEVLYATGAPMSRQTSASPPPWRVLELGLNPLDLRQRISARTQALYSQGLVEETRQLRERYGPELPLLQTIGYGEALQVLAGDLSRPAAIAHTTRRTQQFAKRQRTWFRRQHQPHWLPDDNPLNEAGRLIEAGLG</sequence>
<organism>
    <name type="scientific">Synechococcus sp. (strain WH7803)</name>
    <dbReference type="NCBI Taxonomy" id="32051"/>
    <lineage>
        <taxon>Bacteria</taxon>
        <taxon>Bacillati</taxon>
        <taxon>Cyanobacteriota</taxon>
        <taxon>Cyanophyceae</taxon>
        <taxon>Synechococcales</taxon>
        <taxon>Synechococcaceae</taxon>
        <taxon>Synechococcus</taxon>
    </lineage>
</organism>
<name>MIAA_SYNPW</name>
<protein>
    <recommendedName>
        <fullName evidence="1">tRNA dimethylallyltransferase</fullName>
        <ecNumber evidence="1">2.5.1.75</ecNumber>
    </recommendedName>
    <alternativeName>
        <fullName evidence="1">Dimethylallyl diphosphate:tRNA dimethylallyltransferase</fullName>
        <shortName evidence="1">DMAPP:tRNA dimethylallyltransferase</shortName>
        <shortName evidence="1">DMATase</shortName>
    </alternativeName>
    <alternativeName>
        <fullName evidence="1">Isopentenyl-diphosphate:tRNA isopentenyltransferase</fullName>
        <shortName evidence="1">IPP transferase</shortName>
        <shortName evidence="1">IPPT</shortName>
        <shortName evidence="1">IPTase</shortName>
    </alternativeName>
</protein>
<gene>
    <name evidence="1" type="primary">miaA</name>
    <name type="ordered locus">SynWH7803_0146</name>
</gene>
<comment type="function">
    <text evidence="1">Catalyzes the transfer of a dimethylallyl group onto the adenine at position 37 in tRNAs that read codons beginning with uridine, leading to the formation of N6-(dimethylallyl)adenosine (i(6)A).</text>
</comment>
<comment type="catalytic activity">
    <reaction evidence="1">
        <text>adenosine(37) in tRNA + dimethylallyl diphosphate = N(6)-dimethylallyladenosine(37) in tRNA + diphosphate</text>
        <dbReference type="Rhea" id="RHEA:26482"/>
        <dbReference type="Rhea" id="RHEA-COMP:10162"/>
        <dbReference type="Rhea" id="RHEA-COMP:10375"/>
        <dbReference type="ChEBI" id="CHEBI:33019"/>
        <dbReference type="ChEBI" id="CHEBI:57623"/>
        <dbReference type="ChEBI" id="CHEBI:74411"/>
        <dbReference type="ChEBI" id="CHEBI:74415"/>
        <dbReference type="EC" id="2.5.1.75"/>
    </reaction>
</comment>
<comment type="cofactor">
    <cofactor evidence="1">
        <name>Mg(2+)</name>
        <dbReference type="ChEBI" id="CHEBI:18420"/>
    </cofactor>
</comment>
<comment type="subunit">
    <text evidence="1">Monomer.</text>
</comment>
<comment type="similarity">
    <text evidence="1">Belongs to the IPP transferase family.</text>
</comment>